<gene>
    <name type="primary">cobD</name>
    <name type="ordered locus">slr1925</name>
</gene>
<proteinExistence type="inferred from homology"/>
<protein>
    <recommendedName>
        <fullName>Cobalamin biosynthesis protein CobD</fullName>
    </recommendedName>
</protein>
<name>COBD_SYNY3</name>
<organism>
    <name type="scientific">Synechocystis sp. (strain ATCC 27184 / PCC 6803 / Kazusa)</name>
    <dbReference type="NCBI Taxonomy" id="1111708"/>
    <lineage>
        <taxon>Bacteria</taxon>
        <taxon>Bacillati</taxon>
        <taxon>Cyanobacteriota</taxon>
        <taxon>Cyanophyceae</taxon>
        <taxon>Synechococcales</taxon>
        <taxon>Merismopediaceae</taxon>
        <taxon>Synechocystis</taxon>
    </lineage>
</organism>
<reference key="1">
    <citation type="journal article" date="1996" name="DNA Res.">
        <title>Sequence analysis of the genome of the unicellular cyanobacterium Synechocystis sp. strain PCC6803. II. Sequence determination of the entire genome and assignment of potential protein-coding regions.</title>
        <authorList>
            <person name="Kaneko T."/>
            <person name="Sato S."/>
            <person name="Kotani H."/>
            <person name="Tanaka A."/>
            <person name="Asamizu E."/>
            <person name="Nakamura Y."/>
            <person name="Miyajima N."/>
            <person name="Hirosawa M."/>
            <person name="Sugiura M."/>
            <person name="Sasamoto S."/>
            <person name="Kimura T."/>
            <person name="Hosouchi T."/>
            <person name="Matsuno A."/>
            <person name="Muraki A."/>
            <person name="Nakazaki N."/>
            <person name="Naruo K."/>
            <person name="Okumura S."/>
            <person name="Shimpo S."/>
            <person name="Takeuchi C."/>
            <person name="Wada T."/>
            <person name="Watanabe A."/>
            <person name="Yamada M."/>
            <person name="Yasuda M."/>
            <person name="Tabata S."/>
        </authorList>
    </citation>
    <scope>NUCLEOTIDE SEQUENCE [LARGE SCALE GENOMIC DNA]</scope>
    <source>
        <strain>ATCC 27184 / PCC 6803 / Kazusa</strain>
    </source>
</reference>
<keyword id="KW-1003">Cell membrane</keyword>
<keyword id="KW-0169">Cobalamin biosynthesis</keyword>
<keyword id="KW-0472">Membrane</keyword>
<keyword id="KW-1185">Reference proteome</keyword>
<keyword id="KW-0812">Transmembrane</keyword>
<keyword id="KW-1133">Transmembrane helix</keyword>
<sequence>MMAVDPNLFPLIAVIILGGSALLDFLLGDPKSWRHPVEFIGSVINFASQLIIRKVNDKNSRRLWGIFLGLKIIISSGFLAWLIVYLAEKVSPVLAVIIQIIGVASCFAGHSLAQAAQSVIEPLKAGDLPTARQKLALFVGRDTNNLSEREILRATVESVAENTVDGVTSPLFYALLGILFPFVGPWPLAIAYKAASTLDSMVGYKREPYTDLGWFSARLEDYLTWLPCRLTVFMLAILSGKPKQTWAIVRRDGPLDPSPNSGWSEAIYAAILGIQLGGDNYYQGVLKSKPLLGDGIQPLTIAKIAQSLWYSRTVFLWQLLLGLTVILAIQAGAMSEISFNKI</sequence>
<dbReference type="EMBL" id="BA000022">
    <property type="protein sequence ID" value="BAA18576.1"/>
    <property type="molecule type" value="Genomic_DNA"/>
</dbReference>
<dbReference type="PIR" id="S76447">
    <property type="entry name" value="S76447"/>
</dbReference>
<dbReference type="STRING" id="1148.gene:10499458"/>
<dbReference type="PaxDb" id="1148-1653664"/>
<dbReference type="EnsemblBacteria" id="BAA18576">
    <property type="protein sequence ID" value="BAA18576"/>
    <property type="gene ID" value="BAA18576"/>
</dbReference>
<dbReference type="KEGG" id="syn:slr1925"/>
<dbReference type="eggNOG" id="COG1270">
    <property type="taxonomic scope" value="Bacteria"/>
</dbReference>
<dbReference type="InParanoid" id="P74475"/>
<dbReference type="PhylomeDB" id="P74475"/>
<dbReference type="UniPathway" id="UPA00148"/>
<dbReference type="Proteomes" id="UP000001425">
    <property type="component" value="Chromosome"/>
</dbReference>
<dbReference type="GO" id="GO:0005886">
    <property type="term" value="C:plasma membrane"/>
    <property type="evidence" value="ECO:0007669"/>
    <property type="project" value="UniProtKB-SubCell"/>
</dbReference>
<dbReference type="GO" id="GO:0015420">
    <property type="term" value="F:ABC-type vitamin B12 transporter activity"/>
    <property type="evidence" value="ECO:0007669"/>
    <property type="project" value="UniProtKB-UniRule"/>
</dbReference>
<dbReference type="GO" id="GO:0048472">
    <property type="term" value="F:threonine-phosphate decarboxylase activity"/>
    <property type="evidence" value="ECO:0007669"/>
    <property type="project" value="InterPro"/>
</dbReference>
<dbReference type="GO" id="GO:0009236">
    <property type="term" value="P:cobalamin biosynthetic process"/>
    <property type="evidence" value="ECO:0007669"/>
    <property type="project" value="UniProtKB-UniRule"/>
</dbReference>
<dbReference type="HAMAP" id="MF_00024">
    <property type="entry name" value="CobD_CbiB"/>
    <property type="match status" value="1"/>
</dbReference>
<dbReference type="InterPro" id="IPR004485">
    <property type="entry name" value="Cobalamin_biosynth_CobD/CbiB"/>
</dbReference>
<dbReference type="NCBIfam" id="TIGR00380">
    <property type="entry name" value="cobal_cbiB"/>
    <property type="match status" value="1"/>
</dbReference>
<dbReference type="PANTHER" id="PTHR34308">
    <property type="entry name" value="COBALAMIN BIOSYNTHESIS PROTEIN CBIB"/>
    <property type="match status" value="1"/>
</dbReference>
<dbReference type="PANTHER" id="PTHR34308:SF1">
    <property type="entry name" value="COBALAMIN BIOSYNTHESIS PROTEIN CBIB"/>
    <property type="match status" value="1"/>
</dbReference>
<dbReference type="Pfam" id="PF03186">
    <property type="entry name" value="CobD_Cbib"/>
    <property type="match status" value="1"/>
</dbReference>
<feature type="chain" id="PRO_0000150938" description="Cobalamin biosynthesis protein CobD">
    <location>
        <begin position="1"/>
        <end position="342"/>
    </location>
</feature>
<feature type="transmembrane region" description="Helical" evidence="2">
    <location>
        <begin position="8"/>
        <end position="28"/>
    </location>
</feature>
<feature type="transmembrane region" description="Helical" evidence="2">
    <location>
        <begin position="66"/>
        <end position="86"/>
    </location>
</feature>
<feature type="transmembrane region" description="Helical" evidence="2">
    <location>
        <begin position="93"/>
        <end position="113"/>
    </location>
</feature>
<feature type="transmembrane region" description="Helical" evidence="2">
    <location>
        <begin position="171"/>
        <end position="191"/>
    </location>
</feature>
<feature type="transmembrane region" description="Helical" evidence="2">
    <location>
        <begin position="266"/>
        <end position="286"/>
    </location>
</feature>
<feature type="transmembrane region" description="Helical" evidence="2">
    <location>
        <begin position="314"/>
        <end position="334"/>
    </location>
</feature>
<evidence type="ECO:0000250" key="1"/>
<evidence type="ECO:0000255" key="2"/>
<evidence type="ECO:0000305" key="3"/>
<comment type="function">
    <text evidence="1">Converts cobyric acid to cobinamide by the addition of aminopropanol on the F carboxylic group.</text>
</comment>
<comment type="pathway">
    <text>Cofactor biosynthesis; adenosylcobalamin biosynthesis.</text>
</comment>
<comment type="subcellular location">
    <subcellularLocation>
        <location evidence="3">Cell membrane</location>
        <topology evidence="3">Multi-pass membrane protein</topology>
    </subcellularLocation>
</comment>
<comment type="similarity">
    <text evidence="3">Belongs to the CobD/CbiB family.</text>
</comment>
<accession>P74475</accession>